<keyword id="KW-0002">3D-structure</keyword>
<keyword id="KW-0025">Alternative splicing</keyword>
<keyword id="KW-1267">Proteomics identification</keyword>
<keyword id="KW-1185">Reference proteome</keyword>
<keyword id="KW-0677">Repeat</keyword>
<keyword id="KW-0833">Ubl conjugation pathway</keyword>
<keyword id="KW-0853">WD repeat</keyword>
<sequence>MNKSRWQSRRRHGRRSHQQNPWFRLRDSEDRSDSRAAQPAHDSGHGDDESPSTSSGTAGTSSVPELPGFYFDPEKKRYFRLLPGHNNCNPLTKESIRQKEMESKRLRLLQEEDRRKKIARMGFNASSMLRKSQLGFLNVTNYCHLAHELRLSCMERKKVQIRSMDPSALASDRFNLILADTNSDRLFTVNDVKVGGSKYGIINLQSLKTPTLKVFMHENLYFTNRKVNSVCWASLNHLDSHILLCLMGLAETPGCATLLPASLFVNSHPGIDRPGMLCSFRIPGAWSCAWSLNIQANNCFSTGLSRRVLLTNVVTGHRQSFGTNSDVLAQQFALMAPLLFNGCRSGEIFAIDLRCGNQGKGWKATRLFHDSAVTSVRILQDEQYLMASDMAGKIKLWDLRTTKCVRQYEGHVNEYAYLPLHVHEEEGILVAVGQDCYTRIWSLHDARLLRTIPSPYPASKADIPSVAFSSRLGGSRGAPGLLMAVGQDLYCYSYS</sequence>
<protein>
    <recommendedName>
        <fullName>DDB1- and CUL4-associated factor 4</fullName>
    </recommendedName>
    <alternativeName>
        <fullName>WD repeat-containing protein 21A</fullName>
    </alternativeName>
</protein>
<comment type="function">
    <text evidence="3 4">May function as a substrate receptor for CUL4-DDB1 E3 ubiquitin-protein ligase complex.</text>
</comment>
<comment type="pathway">
    <text>Protein modification; protein ubiquitination.</text>
</comment>
<comment type="subunit">
    <text evidence="3">Interacts with DDB1 and CUL4A.</text>
</comment>
<comment type="interaction">
    <interactant intactId="EBI-2559135">
        <id>Q8WV16</id>
    </interactant>
    <interactant intactId="EBI-350322">
        <id>Q16531</id>
        <label>DDB1</label>
    </interactant>
    <organismsDiffer>false</organismsDiffer>
    <experiments>7</experiments>
</comment>
<comment type="interaction">
    <interactant intactId="EBI-2559135">
        <id>Q8WV16</id>
    </interactant>
    <interactant intactId="EBI-3911844">
        <id>Q9NRC1</id>
        <label>ST7</label>
    </interactant>
    <organismsDiffer>false</organismsDiffer>
    <experiments>3</experiments>
</comment>
<comment type="interaction">
    <interactant intactId="EBI-20852566">
        <id>Q8WV16-4</id>
    </interactant>
    <interactant intactId="EBI-930964">
        <id>P54253</id>
        <label>ATXN1</label>
    </interactant>
    <organismsDiffer>false</organismsDiffer>
    <experiments>3</experiments>
</comment>
<comment type="alternative products">
    <event type="alternative splicing"/>
    <isoform>
        <id>Q8WV16-1</id>
        <name>1</name>
        <sequence type="displayed"/>
    </isoform>
    <isoform>
        <id>Q8WV16-2</id>
        <name>2</name>
        <sequence type="described" ref="VSP_020986 VSP_020987"/>
    </isoform>
    <isoform>
        <id>Q8WV16-3</id>
        <name>3</name>
        <sequence type="described" ref="VSP_047171 VSP_047172"/>
    </isoform>
    <isoform>
        <id>Q8WV16-4</id>
        <name>4</name>
        <sequence type="described" ref="VSP_045427"/>
    </isoform>
    <isoform>
        <id>Q8WV16-5</id>
        <name>5</name>
        <sequence type="described" ref="VSP_047172 VSP_047173"/>
    </isoform>
</comment>
<comment type="polymorphism">
    <text evidence="6">An intronic G-to-A transition (rs2535913) has been associated with leukocyte telomere length. The minor A allele is associated with shorter telomeres and lower expression in lymphoblastoid cells and in sun-exposed skin (PubMed:25624462).</text>
</comment>
<dbReference type="EMBL" id="BX247962">
    <property type="protein sequence ID" value="CAD62301.1"/>
    <property type="molecule type" value="mRNA"/>
</dbReference>
<dbReference type="EMBL" id="AK027745">
    <property type="protein sequence ID" value="BAB55337.1"/>
    <property type="molecule type" value="mRNA"/>
</dbReference>
<dbReference type="EMBL" id="AK300786">
    <property type="protein sequence ID" value="BAG62448.1"/>
    <property type="molecule type" value="mRNA"/>
</dbReference>
<dbReference type="EMBL" id="AC007160">
    <property type="status" value="NOT_ANNOTATED_CDS"/>
    <property type="molecule type" value="Genomic_DNA"/>
</dbReference>
<dbReference type="EMBL" id="AL442663">
    <property type="status" value="NOT_ANNOTATED_CDS"/>
    <property type="molecule type" value="Genomic_DNA"/>
</dbReference>
<dbReference type="EMBL" id="BC018979">
    <property type="protein sequence ID" value="AAH18979.1"/>
    <property type="molecule type" value="mRNA"/>
</dbReference>
<dbReference type="EMBL" id="BC035901">
    <property type="protein sequence ID" value="AAH35901.1"/>
    <property type="molecule type" value="mRNA"/>
</dbReference>
<dbReference type="EMBL" id="AL080157">
    <property type="protein sequence ID" value="CAB45748.1"/>
    <property type="molecule type" value="mRNA"/>
</dbReference>
<dbReference type="CCDS" id="CCDS41968.2">
    <molecule id="Q8WV16-3"/>
</dbReference>
<dbReference type="CCDS" id="CCDS55926.1">
    <molecule id="Q8WV16-5"/>
</dbReference>
<dbReference type="CCDS" id="CCDS9809.1">
    <molecule id="Q8WV16-1"/>
</dbReference>
<dbReference type="CCDS" id="CCDS9810.1">
    <molecule id="Q8WV16-4"/>
</dbReference>
<dbReference type="PIR" id="T12541">
    <property type="entry name" value="T12541"/>
</dbReference>
<dbReference type="RefSeq" id="NP_001156980.1">
    <molecule id="Q8WV16-5"/>
    <property type="nucleotide sequence ID" value="NM_001163508.2"/>
</dbReference>
<dbReference type="RefSeq" id="NP_001156981.1">
    <property type="nucleotide sequence ID" value="NM_001163509.1"/>
</dbReference>
<dbReference type="RefSeq" id="NP_056419.2">
    <molecule id="Q8WV16-1"/>
    <property type="nucleotide sequence ID" value="NM_015604.3"/>
</dbReference>
<dbReference type="RefSeq" id="NP_851937.1">
    <molecule id="Q8WV16-4"/>
    <property type="nucleotide sequence ID" value="NM_181340.3"/>
</dbReference>
<dbReference type="RefSeq" id="NP_851938.2">
    <molecule id="Q8WV16-3"/>
    <property type="nucleotide sequence ID" value="NM_181341.3"/>
</dbReference>
<dbReference type="RefSeq" id="XP_016876696.1">
    <property type="nucleotide sequence ID" value="XM_017021207.1"/>
</dbReference>
<dbReference type="RefSeq" id="XP_016876697.1">
    <property type="nucleotide sequence ID" value="XM_017021208.1"/>
</dbReference>
<dbReference type="PDB" id="3I8C">
    <property type="method" value="X-ray"/>
    <property type="resolution" value="2.80 A"/>
    <property type="chains" value="B=124-136"/>
</dbReference>
<dbReference type="PDBsum" id="3I8C"/>
<dbReference type="SMR" id="Q8WV16"/>
<dbReference type="BioGRID" id="117545">
    <property type="interactions" value="389"/>
</dbReference>
<dbReference type="ComplexPortal" id="CPX-2799">
    <property type="entry name" value="CRL4-DCAF4 E3 ubiquitin ligase complex, CUL4A variant"/>
</dbReference>
<dbReference type="ComplexPortal" id="CPX-2859">
    <property type="entry name" value="CRL4-DCAF4 E3 ubiquitin ligase complex, CUL4B variant"/>
</dbReference>
<dbReference type="DIP" id="DIP-48761N"/>
<dbReference type="FunCoup" id="Q8WV16">
    <property type="interactions" value="1106"/>
</dbReference>
<dbReference type="IntAct" id="Q8WV16">
    <property type="interactions" value="157"/>
</dbReference>
<dbReference type="STRING" id="9606.ENSP00000351147"/>
<dbReference type="GlyGen" id="Q8WV16">
    <property type="glycosylation" value="1 site, 1 O-linked glycan (1 site)"/>
</dbReference>
<dbReference type="iPTMnet" id="Q8WV16"/>
<dbReference type="PhosphoSitePlus" id="Q8WV16"/>
<dbReference type="BioMuta" id="DCAF4"/>
<dbReference type="DMDM" id="116242844"/>
<dbReference type="jPOST" id="Q8WV16"/>
<dbReference type="MassIVE" id="Q8WV16"/>
<dbReference type="PaxDb" id="9606-ENSP00000351147"/>
<dbReference type="PeptideAtlas" id="Q8WV16"/>
<dbReference type="ProteomicsDB" id="33399"/>
<dbReference type="ProteomicsDB" id="70640"/>
<dbReference type="ProteomicsDB" id="74734">
    <molecule id="Q8WV16-1"/>
</dbReference>
<dbReference type="ProteomicsDB" id="74735">
    <molecule id="Q8WV16-2"/>
</dbReference>
<dbReference type="ProteomicsDB" id="74736">
    <molecule id="Q8WV16-3"/>
</dbReference>
<dbReference type="Pumba" id="Q8WV16"/>
<dbReference type="Antibodypedia" id="25273">
    <property type="antibodies" value="138 antibodies from 20 providers"/>
</dbReference>
<dbReference type="DNASU" id="26094"/>
<dbReference type="Ensembl" id="ENST00000358377.7">
    <molecule id="Q8WV16-1"/>
    <property type="protein sequence ID" value="ENSP00000351147.2"/>
    <property type="gene ID" value="ENSG00000119599.17"/>
</dbReference>
<dbReference type="Ensembl" id="ENST00000394234.6">
    <molecule id="Q8WV16-4"/>
    <property type="protein sequence ID" value="ENSP00000377781.2"/>
    <property type="gene ID" value="ENSG00000119599.17"/>
</dbReference>
<dbReference type="Ensembl" id="ENST00000509153.5">
    <molecule id="Q8WV16-3"/>
    <property type="protein sequence ID" value="ENSP00000426178.1"/>
    <property type="gene ID" value="ENSG00000119599.17"/>
</dbReference>
<dbReference type="Ensembl" id="ENST00000555042.5">
    <molecule id="Q8WV16-5"/>
    <property type="protein sequence ID" value="ENSP00000452131.1"/>
    <property type="gene ID" value="ENSG00000119599.17"/>
</dbReference>
<dbReference type="GeneID" id="26094"/>
<dbReference type="KEGG" id="hsa:26094"/>
<dbReference type="MANE-Select" id="ENST00000358377.7">
    <property type="protein sequence ID" value="ENSP00000351147.2"/>
    <property type="RefSeq nucleotide sequence ID" value="NM_015604.4"/>
    <property type="RefSeq protein sequence ID" value="NP_056419.2"/>
</dbReference>
<dbReference type="UCSC" id="uc001xng.4">
    <molecule id="Q8WV16-1"/>
    <property type="organism name" value="human"/>
</dbReference>
<dbReference type="AGR" id="HGNC:20229"/>
<dbReference type="CTD" id="26094"/>
<dbReference type="DisGeNET" id="26094"/>
<dbReference type="GeneCards" id="DCAF4"/>
<dbReference type="HGNC" id="HGNC:20229">
    <property type="gene designation" value="DCAF4"/>
</dbReference>
<dbReference type="HPA" id="ENSG00000119599">
    <property type="expression patterns" value="Low tissue specificity"/>
</dbReference>
<dbReference type="MIM" id="616372">
    <property type="type" value="gene"/>
</dbReference>
<dbReference type="neXtProt" id="NX_Q8WV16"/>
<dbReference type="OpenTargets" id="ENSG00000119599"/>
<dbReference type="PharmGKB" id="PA165478762"/>
<dbReference type="VEuPathDB" id="HostDB:ENSG00000119599"/>
<dbReference type="eggNOG" id="KOG2695">
    <property type="taxonomic scope" value="Eukaryota"/>
</dbReference>
<dbReference type="GeneTree" id="ENSGT00390000009546"/>
<dbReference type="HOGENOM" id="CLU_039586_1_0_1"/>
<dbReference type="InParanoid" id="Q8WV16"/>
<dbReference type="OMA" id="TRIWSFH"/>
<dbReference type="OrthoDB" id="128867at2759"/>
<dbReference type="PAN-GO" id="Q8WV16">
    <property type="GO annotations" value="1 GO annotation based on evolutionary models"/>
</dbReference>
<dbReference type="PhylomeDB" id="Q8WV16"/>
<dbReference type="TreeFam" id="TF332050"/>
<dbReference type="PathwayCommons" id="Q8WV16"/>
<dbReference type="Reactome" id="R-HSA-8951664">
    <property type="pathway name" value="Neddylation"/>
</dbReference>
<dbReference type="SignaLink" id="Q8WV16"/>
<dbReference type="SIGNOR" id="Q8WV16"/>
<dbReference type="UniPathway" id="UPA00143"/>
<dbReference type="BioGRID-ORCS" id="26094">
    <property type="hits" value="25 hits in 1199 CRISPR screens"/>
</dbReference>
<dbReference type="ChiTaRS" id="DCAF4">
    <property type="organism name" value="human"/>
</dbReference>
<dbReference type="EvolutionaryTrace" id="Q8WV16"/>
<dbReference type="GenomeRNAi" id="26094"/>
<dbReference type="Pharos" id="Q8WV16">
    <property type="development level" value="Tbio"/>
</dbReference>
<dbReference type="PRO" id="PR:Q8WV16"/>
<dbReference type="Proteomes" id="UP000005640">
    <property type="component" value="Chromosome 14"/>
</dbReference>
<dbReference type="RNAct" id="Q8WV16">
    <property type="molecule type" value="protein"/>
</dbReference>
<dbReference type="Bgee" id="ENSG00000119599">
    <property type="expression patterns" value="Expressed in primordial germ cell in gonad and 150 other cell types or tissues"/>
</dbReference>
<dbReference type="ExpressionAtlas" id="Q8WV16">
    <property type="expression patterns" value="baseline and differential"/>
</dbReference>
<dbReference type="GO" id="GO:0080008">
    <property type="term" value="C:Cul4-RING E3 ubiquitin ligase complex"/>
    <property type="evidence" value="ECO:0000314"/>
    <property type="project" value="UniProtKB"/>
</dbReference>
<dbReference type="GO" id="GO:0005654">
    <property type="term" value="C:nucleoplasm"/>
    <property type="evidence" value="ECO:0000304"/>
    <property type="project" value="Reactome"/>
</dbReference>
<dbReference type="GO" id="GO:0016567">
    <property type="term" value="P:protein ubiquitination"/>
    <property type="evidence" value="ECO:0007669"/>
    <property type="project" value="UniProtKB-UniPathway"/>
</dbReference>
<dbReference type="FunFam" id="2.130.10.10:FF:000494">
    <property type="entry name" value="DDB1- and CUL4-associated factor 4 isoform X1"/>
    <property type="match status" value="1"/>
</dbReference>
<dbReference type="Gene3D" id="2.130.10.10">
    <property type="entry name" value="YVTN repeat-like/Quinoprotein amine dehydrogenase"/>
    <property type="match status" value="1"/>
</dbReference>
<dbReference type="InterPro" id="IPR052254">
    <property type="entry name" value="CUL4-DDB1_E3_ligase_receptor"/>
</dbReference>
<dbReference type="InterPro" id="IPR015943">
    <property type="entry name" value="WD40/YVTN_repeat-like_dom_sf"/>
</dbReference>
<dbReference type="InterPro" id="IPR036322">
    <property type="entry name" value="WD40_repeat_dom_sf"/>
</dbReference>
<dbReference type="InterPro" id="IPR001680">
    <property type="entry name" value="WD40_rpt"/>
</dbReference>
<dbReference type="PANTHER" id="PTHR44472:SF3">
    <property type="entry name" value="DDB1- AND CUL4-ASSOCIATED FACTOR 4"/>
    <property type="match status" value="1"/>
</dbReference>
<dbReference type="PANTHER" id="PTHR44472">
    <property type="entry name" value="DDB1- AND CUL4-ASSOCIATED FACTOR 4-RELATED"/>
    <property type="match status" value="1"/>
</dbReference>
<dbReference type="Pfam" id="PF23761">
    <property type="entry name" value="Beta-prop_DCAF4"/>
    <property type="match status" value="1"/>
</dbReference>
<dbReference type="SMART" id="SM00320">
    <property type="entry name" value="WD40"/>
    <property type="match status" value="2"/>
</dbReference>
<dbReference type="SUPFAM" id="SSF50978">
    <property type="entry name" value="WD40 repeat-like"/>
    <property type="match status" value="1"/>
</dbReference>
<dbReference type="PROSITE" id="PS50082">
    <property type="entry name" value="WD_REPEATS_2"/>
    <property type="match status" value="1"/>
</dbReference>
<dbReference type="PROSITE" id="PS50294">
    <property type="entry name" value="WD_REPEATS_REGION"/>
    <property type="match status" value="1"/>
</dbReference>
<feature type="chain" id="PRO_0000051368" description="DDB1- and CUL4-associated factor 4">
    <location>
        <begin position="1"/>
        <end position="495"/>
    </location>
</feature>
<feature type="repeat" description="WD 1">
    <location>
        <begin position="368"/>
        <end position="407"/>
    </location>
</feature>
<feature type="repeat" description="WD 2">
    <location>
        <begin position="410"/>
        <end position="451"/>
    </location>
</feature>
<feature type="region of interest" description="Disordered" evidence="1">
    <location>
        <begin position="1"/>
        <end position="66"/>
    </location>
</feature>
<feature type="compositionally biased region" description="Basic residues" evidence="1">
    <location>
        <begin position="1"/>
        <end position="17"/>
    </location>
</feature>
<feature type="compositionally biased region" description="Basic and acidic residues" evidence="1">
    <location>
        <begin position="24"/>
        <end position="34"/>
    </location>
</feature>
<feature type="compositionally biased region" description="Low complexity" evidence="1">
    <location>
        <begin position="51"/>
        <end position="62"/>
    </location>
</feature>
<feature type="splice variant" id="VSP_045427" description="In isoform 4." evidence="8">
    <location>
        <begin position="1"/>
        <end position="100"/>
    </location>
</feature>
<feature type="splice variant" id="VSP_047171" description="In isoform 3." evidence="7">
    <location>
        <begin position="118"/>
        <end position="178"/>
    </location>
</feature>
<feature type="splice variant" id="VSP_047172" description="In isoform 3 and isoform 5." evidence="7">
    <original>P</original>
    <variation>PA</variation>
    <location>
        <position position="269"/>
    </location>
</feature>
<feature type="splice variant" id="VSP_047173" description="In isoform 5." evidence="7">
    <location>
        <begin position="329"/>
        <end position="335"/>
    </location>
</feature>
<feature type="splice variant" id="VSP_020986" description="In isoform 2." evidence="9">
    <original>VG</original>
    <variation>GT</variation>
    <location>
        <begin position="432"/>
        <end position="433"/>
    </location>
</feature>
<feature type="splice variant" id="VSP_020987" description="In isoform 2." evidence="9">
    <location>
        <begin position="434"/>
        <end position="495"/>
    </location>
</feature>
<feature type="sequence variant" id="VAR_027908" description="In dbSNP:rs2302588.">
    <original>W</original>
    <variation>C</variation>
    <location>
        <position position="22"/>
    </location>
</feature>
<feature type="sequence variant" id="VAR_027909" description="In dbSNP:rs17856582." evidence="2 5">
    <original>K</original>
    <variation>T</variation>
    <location>
        <position position="193"/>
    </location>
</feature>
<feature type="sequence variant" id="VAR_027910" description="In dbSNP:rs7155812.">
    <original>N</original>
    <variation>S</variation>
    <location>
        <position position="266"/>
    </location>
</feature>
<feature type="sequence variant" id="VAR_027911" description="In dbSNP:rs17856583." evidence="2 5">
    <original>L</original>
    <variation>F</variation>
    <location>
        <position position="334"/>
    </location>
</feature>
<feature type="sequence variant" id="VAR_027912" description="In dbSNP:rs3815460.">
    <original>S</original>
    <variation>C</variation>
    <location>
        <position position="345"/>
    </location>
</feature>
<feature type="sequence variant" id="VAR_027913" description="In dbSNP:rs17856584." evidence="2">
    <original>R</original>
    <variation>I</variation>
    <location>
        <position position="439"/>
    </location>
</feature>
<feature type="sequence conflict" description="In Ref. 5; CAB45748." evidence="10" ref="5">
    <original>S</original>
    <variation>G</variation>
    <location>
        <position position="4"/>
    </location>
</feature>
<feature type="sequence conflict" description="In Ref. 2; BAB55337." evidence="10" ref="2">
    <original>R</original>
    <variation>Q</variation>
    <location>
        <position position="35"/>
    </location>
</feature>
<feature type="sequence conflict" description="In Ref. 2; BAB55337." evidence="10" ref="2">
    <original>H</original>
    <variation>Y</variation>
    <location>
        <position position="45"/>
    </location>
</feature>
<feature type="sequence conflict" description="In Ref. 2; BAB55337." evidence="10" ref="2">
    <original>E</original>
    <variation>G</variation>
    <location>
        <position position="65"/>
    </location>
</feature>
<feature type="helix" evidence="11">
    <location>
        <begin position="126"/>
        <end position="134"/>
    </location>
</feature>
<organism>
    <name type="scientific">Homo sapiens</name>
    <name type="common">Human</name>
    <dbReference type="NCBI Taxonomy" id="9606"/>
    <lineage>
        <taxon>Eukaryota</taxon>
        <taxon>Metazoa</taxon>
        <taxon>Chordata</taxon>
        <taxon>Craniata</taxon>
        <taxon>Vertebrata</taxon>
        <taxon>Euteleostomi</taxon>
        <taxon>Mammalia</taxon>
        <taxon>Eutheria</taxon>
        <taxon>Euarchontoglires</taxon>
        <taxon>Primates</taxon>
        <taxon>Haplorrhini</taxon>
        <taxon>Catarrhini</taxon>
        <taxon>Hominidae</taxon>
        <taxon>Homo</taxon>
    </lineage>
</organism>
<name>DCAF4_HUMAN</name>
<gene>
    <name type="primary">DCAF4</name>
    <name type="synonym">WDR21</name>
    <name type="synonym">WDR21A</name>
</gene>
<accession>Q8WV16</accession>
<accession>B4DUT6</accession>
<accession>G3V522</accession>
<accession>Q86U31</accession>
<accession>Q8IV10</accession>
<accession>Q96K22</accession>
<accession>Q9Y4P5</accession>
<proteinExistence type="evidence at protein level"/>
<evidence type="ECO:0000256" key="1">
    <source>
        <dbReference type="SAM" id="MobiDB-lite"/>
    </source>
</evidence>
<evidence type="ECO:0000269" key="2">
    <source>
    </source>
</evidence>
<evidence type="ECO:0000269" key="3">
    <source>
    </source>
</evidence>
<evidence type="ECO:0000269" key="4">
    <source>
    </source>
</evidence>
<evidence type="ECO:0000269" key="5">
    <source>
    </source>
</evidence>
<evidence type="ECO:0000269" key="6">
    <source>
    </source>
</evidence>
<evidence type="ECO:0000303" key="7">
    <source>
    </source>
</evidence>
<evidence type="ECO:0000303" key="8">
    <source>
    </source>
</evidence>
<evidence type="ECO:0000303" key="9">
    <source>
    </source>
</evidence>
<evidence type="ECO:0000305" key="10"/>
<evidence type="ECO:0007829" key="11">
    <source>
        <dbReference type="PDB" id="3I8C"/>
    </source>
</evidence>
<reference key="1">
    <citation type="submission" date="2003-02" db="EMBL/GenBank/DDBJ databases">
        <title>Full-length cDNA libraries and normalization.</title>
        <authorList>
            <person name="Li W.B."/>
            <person name="Gruber C."/>
            <person name="Jessee J."/>
            <person name="Polayes D."/>
        </authorList>
    </citation>
    <scope>NUCLEOTIDE SEQUENCE [LARGE SCALE MRNA] (ISOFORM 1)</scope>
    <source>
        <tissue>Neuroblastoma</tissue>
    </source>
</reference>
<reference key="2">
    <citation type="journal article" date="2004" name="Nat. Genet.">
        <title>Complete sequencing and characterization of 21,243 full-length human cDNAs.</title>
        <authorList>
            <person name="Ota T."/>
            <person name="Suzuki Y."/>
            <person name="Nishikawa T."/>
            <person name="Otsuki T."/>
            <person name="Sugiyama T."/>
            <person name="Irie R."/>
            <person name="Wakamatsu A."/>
            <person name="Hayashi K."/>
            <person name="Sato H."/>
            <person name="Nagai K."/>
            <person name="Kimura K."/>
            <person name="Makita H."/>
            <person name="Sekine M."/>
            <person name="Obayashi M."/>
            <person name="Nishi T."/>
            <person name="Shibahara T."/>
            <person name="Tanaka T."/>
            <person name="Ishii S."/>
            <person name="Yamamoto J."/>
            <person name="Saito K."/>
            <person name="Kawai Y."/>
            <person name="Isono Y."/>
            <person name="Nakamura Y."/>
            <person name="Nagahari K."/>
            <person name="Murakami K."/>
            <person name="Yasuda T."/>
            <person name="Iwayanagi T."/>
            <person name="Wagatsuma M."/>
            <person name="Shiratori A."/>
            <person name="Sudo H."/>
            <person name="Hosoiri T."/>
            <person name="Kaku Y."/>
            <person name="Kodaira H."/>
            <person name="Kondo H."/>
            <person name="Sugawara M."/>
            <person name="Takahashi M."/>
            <person name="Kanda K."/>
            <person name="Yokoi T."/>
            <person name="Furuya T."/>
            <person name="Kikkawa E."/>
            <person name="Omura Y."/>
            <person name="Abe K."/>
            <person name="Kamihara K."/>
            <person name="Katsuta N."/>
            <person name="Sato K."/>
            <person name="Tanikawa M."/>
            <person name="Yamazaki M."/>
            <person name="Ninomiya K."/>
            <person name="Ishibashi T."/>
            <person name="Yamashita H."/>
            <person name="Murakawa K."/>
            <person name="Fujimori K."/>
            <person name="Tanai H."/>
            <person name="Kimata M."/>
            <person name="Watanabe M."/>
            <person name="Hiraoka S."/>
            <person name="Chiba Y."/>
            <person name="Ishida S."/>
            <person name="Ono Y."/>
            <person name="Takiguchi S."/>
            <person name="Watanabe S."/>
            <person name="Yosida M."/>
            <person name="Hotuta T."/>
            <person name="Kusano J."/>
            <person name="Kanehori K."/>
            <person name="Takahashi-Fujii A."/>
            <person name="Hara H."/>
            <person name="Tanase T.-O."/>
            <person name="Nomura Y."/>
            <person name="Togiya S."/>
            <person name="Komai F."/>
            <person name="Hara R."/>
            <person name="Takeuchi K."/>
            <person name="Arita M."/>
            <person name="Imose N."/>
            <person name="Musashino K."/>
            <person name="Yuuki H."/>
            <person name="Oshima A."/>
            <person name="Sasaki N."/>
            <person name="Aotsuka S."/>
            <person name="Yoshikawa Y."/>
            <person name="Matsunawa H."/>
            <person name="Ichihara T."/>
            <person name="Shiohata N."/>
            <person name="Sano S."/>
            <person name="Moriya S."/>
            <person name="Momiyama H."/>
            <person name="Satoh N."/>
            <person name="Takami S."/>
            <person name="Terashima Y."/>
            <person name="Suzuki O."/>
            <person name="Nakagawa S."/>
            <person name="Senoh A."/>
            <person name="Mizoguchi H."/>
            <person name="Goto Y."/>
            <person name="Shimizu F."/>
            <person name="Wakebe H."/>
            <person name="Hishigaki H."/>
            <person name="Watanabe T."/>
            <person name="Sugiyama A."/>
            <person name="Takemoto M."/>
            <person name="Kawakami B."/>
            <person name="Yamazaki M."/>
            <person name="Watanabe K."/>
            <person name="Kumagai A."/>
            <person name="Itakura S."/>
            <person name="Fukuzumi Y."/>
            <person name="Fujimori Y."/>
            <person name="Komiyama M."/>
            <person name="Tashiro H."/>
            <person name="Tanigami A."/>
            <person name="Fujiwara T."/>
            <person name="Ono T."/>
            <person name="Yamada K."/>
            <person name="Fujii Y."/>
            <person name="Ozaki K."/>
            <person name="Hirao M."/>
            <person name="Ohmori Y."/>
            <person name="Kawabata A."/>
            <person name="Hikiji T."/>
            <person name="Kobatake N."/>
            <person name="Inagaki H."/>
            <person name="Ikema Y."/>
            <person name="Okamoto S."/>
            <person name="Okitani R."/>
            <person name="Kawakami T."/>
            <person name="Noguchi S."/>
            <person name="Itoh T."/>
            <person name="Shigeta K."/>
            <person name="Senba T."/>
            <person name="Matsumura K."/>
            <person name="Nakajima Y."/>
            <person name="Mizuno T."/>
            <person name="Morinaga M."/>
            <person name="Sasaki M."/>
            <person name="Togashi T."/>
            <person name="Oyama M."/>
            <person name="Hata H."/>
            <person name="Watanabe M."/>
            <person name="Komatsu T."/>
            <person name="Mizushima-Sugano J."/>
            <person name="Satoh T."/>
            <person name="Shirai Y."/>
            <person name="Takahashi Y."/>
            <person name="Nakagawa K."/>
            <person name="Okumura K."/>
            <person name="Nagase T."/>
            <person name="Nomura N."/>
            <person name="Kikuchi H."/>
            <person name="Masuho Y."/>
            <person name="Yamashita R."/>
            <person name="Nakai K."/>
            <person name="Yada T."/>
            <person name="Nakamura Y."/>
            <person name="Ohara O."/>
            <person name="Isogai T."/>
            <person name="Sugano S."/>
        </authorList>
    </citation>
    <scope>NUCLEOTIDE SEQUENCE [LARGE SCALE MRNA] (ISOFORMS 3 AND 5)</scope>
    <source>
        <tissue>Ovarian carcinoma</tissue>
    </source>
</reference>
<reference key="3">
    <citation type="journal article" date="2003" name="Nature">
        <title>The DNA sequence and analysis of human chromosome 14.</title>
        <authorList>
            <person name="Heilig R."/>
            <person name="Eckenberg R."/>
            <person name="Petit J.-L."/>
            <person name="Fonknechten N."/>
            <person name="Da Silva C."/>
            <person name="Cattolico L."/>
            <person name="Levy M."/>
            <person name="Barbe V."/>
            <person name="De Berardinis V."/>
            <person name="Ureta-Vidal A."/>
            <person name="Pelletier E."/>
            <person name="Vico V."/>
            <person name="Anthouard V."/>
            <person name="Rowen L."/>
            <person name="Madan A."/>
            <person name="Qin S."/>
            <person name="Sun H."/>
            <person name="Du H."/>
            <person name="Pepin K."/>
            <person name="Artiguenave F."/>
            <person name="Robert C."/>
            <person name="Cruaud C."/>
            <person name="Bruels T."/>
            <person name="Jaillon O."/>
            <person name="Friedlander L."/>
            <person name="Samson G."/>
            <person name="Brottier P."/>
            <person name="Cure S."/>
            <person name="Segurens B."/>
            <person name="Aniere F."/>
            <person name="Samain S."/>
            <person name="Crespeau H."/>
            <person name="Abbasi N."/>
            <person name="Aiach N."/>
            <person name="Boscus D."/>
            <person name="Dickhoff R."/>
            <person name="Dors M."/>
            <person name="Dubois I."/>
            <person name="Friedman C."/>
            <person name="Gouyvenoux M."/>
            <person name="James R."/>
            <person name="Madan A."/>
            <person name="Mairey-Estrada B."/>
            <person name="Mangenot S."/>
            <person name="Martins N."/>
            <person name="Menard M."/>
            <person name="Oztas S."/>
            <person name="Ratcliffe A."/>
            <person name="Shaffer T."/>
            <person name="Trask B."/>
            <person name="Vacherie B."/>
            <person name="Bellemere C."/>
            <person name="Belser C."/>
            <person name="Besnard-Gonnet M."/>
            <person name="Bartol-Mavel D."/>
            <person name="Boutard M."/>
            <person name="Briez-Silla S."/>
            <person name="Combette S."/>
            <person name="Dufosse-Laurent V."/>
            <person name="Ferron C."/>
            <person name="Lechaplais C."/>
            <person name="Louesse C."/>
            <person name="Muselet D."/>
            <person name="Magdelenat G."/>
            <person name="Pateau E."/>
            <person name="Petit E."/>
            <person name="Sirvain-Trukniewicz P."/>
            <person name="Trybou A."/>
            <person name="Vega-Czarny N."/>
            <person name="Bataille E."/>
            <person name="Bluet E."/>
            <person name="Bordelais I."/>
            <person name="Dubois M."/>
            <person name="Dumont C."/>
            <person name="Guerin T."/>
            <person name="Haffray S."/>
            <person name="Hammadi R."/>
            <person name="Muanga J."/>
            <person name="Pellouin V."/>
            <person name="Robert D."/>
            <person name="Wunderle E."/>
            <person name="Gauguet G."/>
            <person name="Roy A."/>
            <person name="Sainte-Marthe L."/>
            <person name="Verdier J."/>
            <person name="Verdier-Discala C."/>
            <person name="Hillier L.W."/>
            <person name="Fulton L."/>
            <person name="McPherson J."/>
            <person name="Matsuda F."/>
            <person name="Wilson R."/>
            <person name="Scarpelli C."/>
            <person name="Gyapay G."/>
            <person name="Wincker P."/>
            <person name="Saurin W."/>
            <person name="Quetier F."/>
            <person name="Waterston R."/>
            <person name="Hood L."/>
            <person name="Weissenbach J."/>
        </authorList>
    </citation>
    <scope>NUCLEOTIDE SEQUENCE [LARGE SCALE GENOMIC DNA]</scope>
</reference>
<reference key="4">
    <citation type="journal article" date="2004" name="Genome Res.">
        <title>The status, quality, and expansion of the NIH full-length cDNA project: the Mammalian Gene Collection (MGC).</title>
        <authorList>
            <consortium name="The MGC Project Team"/>
        </authorList>
    </citation>
    <scope>NUCLEOTIDE SEQUENCE [LARGE SCALE MRNA] (ISOFORMS 1 AND 4)</scope>
    <scope>VARIANTS THR-193; PHE-334 AND ILE-439</scope>
    <source>
        <tissue>Brain</tissue>
        <tissue>Uterus</tissue>
    </source>
</reference>
<reference key="5">
    <citation type="journal article" date="2007" name="BMC Genomics">
        <title>The full-ORF clone resource of the German cDNA consortium.</title>
        <authorList>
            <person name="Bechtel S."/>
            <person name="Rosenfelder H."/>
            <person name="Duda A."/>
            <person name="Schmidt C.P."/>
            <person name="Ernst U."/>
            <person name="Wellenreuther R."/>
            <person name="Mehrle A."/>
            <person name="Schuster C."/>
            <person name="Bahr A."/>
            <person name="Bloecker H."/>
            <person name="Heubner D."/>
            <person name="Hoerlein A."/>
            <person name="Michel G."/>
            <person name="Wedler H."/>
            <person name="Koehrer K."/>
            <person name="Ottenwaelder B."/>
            <person name="Poustka A."/>
            <person name="Wiemann S."/>
            <person name="Schupp I."/>
        </authorList>
    </citation>
    <scope>NUCLEOTIDE SEQUENCE [LARGE SCALE MRNA] OF 4-495 (ISOFORM 2)</scope>
    <scope>VARIANTS THR-193 AND PHE-334</scope>
    <source>
        <tissue>Testis</tissue>
    </source>
</reference>
<reference key="6">
    <citation type="journal article" date="2006" name="Mol. Cell">
        <title>A family of diverse Cul4-Ddb1-interacting proteins includes Cdt2, which is required for S phase destruction of the replication factor Cdt1.</title>
        <authorList>
            <person name="Jin J."/>
            <person name="Arias E.E."/>
            <person name="Chen J."/>
            <person name="Harper J.W."/>
            <person name="Walter J.C."/>
        </authorList>
    </citation>
    <scope>FUNCTION</scope>
    <scope>INTERACTION WITH DDB1 AND CUL4A</scope>
    <scope>IDENTIFICATION BY MASS SPECTROMETRY</scope>
</reference>
<reference key="7">
    <citation type="journal article" date="2006" name="Nature">
        <title>Molecular architecture and assembly of the DDB1-CUL4A ubiquitin ligase machinery.</title>
        <authorList>
            <person name="Angers S."/>
            <person name="Li T."/>
            <person name="Yi X."/>
            <person name="MacCoss M.J."/>
            <person name="Moon R.T."/>
            <person name="Zheng N."/>
        </authorList>
    </citation>
    <scope>FUNCTION</scope>
</reference>
<reference key="8">
    <citation type="journal article" date="2015" name="J. Med. Genet.">
        <title>DCAF4, a novel gene associated with leucocyte telomere length.</title>
        <authorList>
            <person name="Mangino M."/>
            <person name="Christiansen L."/>
            <person name="Stone R."/>
            <person name="Hunt S.C."/>
            <person name="Horvath K."/>
            <person name="Eisenberg D.T."/>
            <person name="Kimura M."/>
            <person name="Petersen I."/>
            <person name="Kark J.D."/>
            <person name="Herbig U."/>
            <person name="Reiner A.P."/>
            <person name="Benetos A."/>
            <person name="Codd V."/>
            <person name="Nyholt D.R."/>
            <person name="Sinnreich R."/>
            <person name="Christensen K."/>
            <person name="Nassar H."/>
            <person name="Hwang S.J."/>
            <person name="Levy D."/>
            <person name="Bataille V."/>
            <person name="Fitzpatrick A.L."/>
            <person name="Chen W."/>
            <person name="Berenson G.S."/>
            <person name="Samani N.J."/>
            <person name="Martin N.G."/>
            <person name="Tishkoff S."/>
            <person name="Schork N.J."/>
            <person name="Kyvik K.O."/>
            <person name="Dalgaard C."/>
            <person name="Spector T.D."/>
            <person name="Aviv A."/>
        </authorList>
    </citation>
    <scope>POLYMORPHISM</scope>
</reference>